<accession>A0A172M466</accession>
<reference key="1">
    <citation type="journal article" date="2016" name="Front. Microbiol.">
        <title>Studying the mechanism of Plasmopara viticola RxLR effectors on suppressing plant immunity.</title>
        <authorList>
            <person name="Xiang J."/>
            <person name="Li X."/>
            <person name="Wu J."/>
            <person name="Yin L."/>
            <person name="Zhang Y."/>
            <person name="Lu J."/>
        </authorList>
    </citation>
    <scope>NUCLEOTIDE SEQUENCE [MRNA]</scope>
    <scope>INDUCTION</scope>
    <scope>FUNCTION</scope>
    <scope>SUBCELLULAR LOCATION</scope>
    <source>
        <strain>ZJ-1-1</strain>
    </source>
</reference>
<reference key="2">
    <citation type="journal article" date="2015" name="Physiol. Mol. Plant Pathol.">
        <title>Characterization of the secretome of Plasmopara viticola by de novo transcriptome analysis.</title>
        <authorList>
            <person name="Yin L."/>
            <person name="Li X."/>
            <person name="Xiang J."/>
            <person name="Qu J."/>
            <person name="Zhang Y."/>
            <person name="Dry I.B."/>
            <person name="Lu J."/>
        </authorList>
    </citation>
    <scope>IDENTIFICATION</scope>
    <scope>INDUCTION</scope>
    <scope>DOMAIN</scope>
</reference>
<protein>
    <recommendedName>
        <fullName evidence="4">Secreted RxLR effector protein 30</fullName>
    </recommendedName>
</protein>
<comment type="function">
    <text evidence="2">Effector that acts as a broad suppressor of cell death to interrupt plant immunity. Inhibits cell death induced by cell death-inducing proteins, including the PAMP elicitor INF1 from P.infestans.</text>
</comment>
<comment type="subcellular location">
    <subcellularLocation>
        <location evidence="2">Secreted</location>
    </subcellularLocation>
    <subcellularLocation>
        <location evidence="2">Host nucleus</location>
    </subcellularLocation>
</comment>
<comment type="induction">
    <text evidence="2 3">Expression is up-regulated at the earlier infection stages.</text>
</comment>
<comment type="domain">
    <text evidence="6">The RxLR-dEER motif acts to carry the protein into the host cell cytoplasm through binding to cell surface phosphatidylinositol-3-phosphate.</text>
</comment>
<comment type="similarity">
    <text evidence="5">Belongs to the RxLR effector family.</text>
</comment>
<evidence type="ECO:0000255" key="1"/>
<evidence type="ECO:0000269" key="2">
    <source>
    </source>
</evidence>
<evidence type="ECO:0000269" key="3">
    <source ref="2"/>
</evidence>
<evidence type="ECO:0000303" key="4">
    <source ref="2"/>
</evidence>
<evidence type="ECO:0000305" key="5"/>
<evidence type="ECO:0000305" key="6">
    <source ref="2"/>
</evidence>
<proteinExistence type="evidence at transcript level"/>
<dbReference type="EMBL" id="KX010960">
    <property type="protein sequence ID" value="ANC73380.1"/>
    <property type="molecule type" value="mRNA"/>
</dbReference>
<dbReference type="GO" id="GO:0005576">
    <property type="term" value="C:extracellular region"/>
    <property type="evidence" value="ECO:0007669"/>
    <property type="project" value="UniProtKB-SubCell"/>
</dbReference>
<dbReference type="GO" id="GO:0042025">
    <property type="term" value="C:host cell nucleus"/>
    <property type="evidence" value="ECO:0007669"/>
    <property type="project" value="UniProtKB-SubCell"/>
</dbReference>
<organism>
    <name type="scientific">Plasmopara viticola</name>
    <name type="common">Downy mildew of grapevine</name>
    <name type="synonym">Botrytis viticola</name>
    <dbReference type="NCBI Taxonomy" id="143451"/>
    <lineage>
        <taxon>Eukaryota</taxon>
        <taxon>Sar</taxon>
        <taxon>Stramenopiles</taxon>
        <taxon>Oomycota</taxon>
        <taxon>Peronosporales</taxon>
        <taxon>Peronosporaceae</taxon>
        <taxon>Plasmopara</taxon>
    </lineage>
</organism>
<keyword id="KW-1048">Host nucleus</keyword>
<keyword id="KW-0964">Secreted</keyword>
<keyword id="KW-0732">Signal</keyword>
<keyword id="KW-0843">Virulence</keyword>
<gene>
    <name evidence="4" type="primary">RxLR30</name>
</gene>
<sequence>MRSSTILIVLGIAILAVNGVATALTRDGIEMGTQEKSRLLRSTSTEHETDEERKFRFKLPSFRFKRRVKVPKVAKPKKKNPVMANRARKYHDVLHSDRGYDVYDMMRSDKLTLQELIEFLTTYGQIDKNGIKILTDGLRSYNIPKAYPVAK</sequence>
<feature type="signal peptide" evidence="1">
    <location>
        <begin position="1"/>
        <end position="19"/>
    </location>
</feature>
<feature type="chain" id="PRO_5007999423" description="Secreted RxLR effector protein 30">
    <location>
        <begin position="20"/>
        <end position="151"/>
    </location>
</feature>
<feature type="short sequence motif" description="RxLR-dEER" evidence="6">
    <location>
        <begin position="38"/>
        <end position="53"/>
    </location>
</feature>
<name>RLR30_PLAVT</name>